<organism>
    <name type="scientific">Leptothrix cholodnii (strain ATCC 51168 / LMG 8142 / SP-6)</name>
    <name type="common">Leptothrix discophora (strain SP-6)</name>
    <dbReference type="NCBI Taxonomy" id="395495"/>
    <lineage>
        <taxon>Bacteria</taxon>
        <taxon>Pseudomonadati</taxon>
        <taxon>Pseudomonadota</taxon>
        <taxon>Betaproteobacteria</taxon>
        <taxon>Burkholderiales</taxon>
        <taxon>Sphaerotilaceae</taxon>
        <taxon>Leptothrix</taxon>
    </lineage>
</organism>
<evidence type="ECO:0000255" key="1">
    <source>
        <dbReference type="HAMAP-Rule" id="MF_00083"/>
    </source>
</evidence>
<evidence type="ECO:0000256" key="2">
    <source>
        <dbReference type="SAM" id="MobiDB-lite"/>
    </source>
</evidence>
<reference key="1">
    <citation type="submission" date="2008-03" db="EMBL/GenBank/DDBJ databases">
        <title>Complete sequence of Leptothrix cholodnii SP-6.</title>
        <authorList>
            <consortium name="US DOE Joint Genome Institute"/>
            <person name="Copeland A."/>
            <person name="Lucas S."/>
            <person name="Lapidus A."/>
            <person name="Glavina del Rio T."/>
            <person name="Dalin E."/>
            <person name="Tice H."/>
            <person name="Bruce D."/>
            <person name="Goodwin L."/>
            <person name="Pitluck S."/>
            <person name="Chertkov O."/>
            <person name="Brettin T."/>
            <person name="Detter J.C."/>
            <person name="Han C."/>
            <person name="Kuske C.R."/>
            <person name="Schmutz J."/>
            <person name="Larimer F."/>
            <person name="Land M."/>
            <person name="Hauser L."/>
            <person name="Kyrpides N."/>
            <person name="Lykidis A."/>
            <person name="Emerson D."/>
            <person name="Richardson P."/>
        </authorList>
    </citation>
    <scope>NUCLEOTIDE SEQUENCE [LARGE SCALE GENOMIC DNA]</scope>
    <source>
        <strain>ATCC 51168 / LMG 8142 / SP-6</strain>
    </source>
</reference>
<feature type="chain" id="PRO_1000092954" description="Peptidyl-tRNA hydrolase">
    <location>
        <begin position="1"/>
        <end position="213"/>
    </location>
</feature>
<feature type="region of interest" description="Disordered" evidence="2">
    <location>
        <begin position="186"/>
        <end position="213"/>
    </location>
</feature>
<feature type="compositionally biased region" description="Pro residues" evidence="2">
    <location>
        <begin position="196"/>
        <end position="213"/>
    </location>
</feature>
<feature type="active site" description="Proton acceptor" evidence="1">
    <location>
        <position position="20"/>
    </location>
</feature>
<feature type="binding site" evidence="1">
    <location>
        <position position="15"/>
    </location>
    <ligand>
        <name>tRNA</name>
        <dbReference type="ChEBI" id="CHEBI:17843"/>
    </ligand>
</feature>
<feature type="binding site" evidence="1">
    <location>
        <position position="66"/>
    </location>
    <ligand>
        <name>tRNA</name>
        <dbReference type="ChEBI" id="CHEBI:17843"/>
    </ligand>
</feature>
<feature type="binding site" evidence="1">
    <location>
        <position position="68"/>
    </location>
    <ligand>
        <name>tRNA</name>
        <dbReference type="ChEBI" id="CHEBI:17843"/>
    </ligand>
</feature>
<feature type="binding site" evidence="1">
    <location>
        <position position="114"/>
    </location>
    <ligand>
        <name>tRNA</name>
        <dbReference type="ChEBI" id="CHEBI:17843"/>
    </ligand>
</feature>
<feature type="site" description="Discriminates between blocked and unblocked aminoacyl-tRNA" evidence="1">
    <location>
        <position position="10"/>
    </location>
</feature>
<feature type="site" description="Stabilizes the basic form of H active site to accept a proton" evidence="1">
    <location>
        <position position="93"/>
    </location>
</feature>
<comment type="function">
    <text evidence="1">Hydrolyzes ribosome-free peptidyl-tRNAs (with 1 or more amino acids incorporated), which drop off the ribosome during protein synthesis, or as a result of ribosome stalling.</text>
</comment>
<comment type="function">
    <text evidence="1">Catalyzes the release of premature peptidyl moieties from peptidyl-tRNA molecules trapped in stalled 50S ribosomal subunits, and thus maintains levels of free tRNAs and 50S ribosomes.</text>
</comment>
<comment type="catalytic activity">
    <reaction evidence="1">
        <text>an N-acyl-L-alpha-aminoacyl-tRNA + H2O = an N-acyl-L-amino acid + a tRNA + H(+)</text>
        <dbReference type="Rhea" id="RHEA:54448"/>
        <dbReference type="Rhea" id="RHEA-COMP:10123"/>
        <dbReference type="Rhea" id="RHEA-COMP:13883"/>
        <dbReference type="ChEBI" id="CHEBI:15377"/>
        <dbReference type="ChEBI" id="CHEBI:15378"/>
        <dbReference type="ChEBI" id="CHEBI:59874"/>
        <dbReference type="ChEBI" id="CHEBI:78442"/>
        <dbReference type="ChEBI" id="CHEBI:138191"/>
        <dbReference type="EC" id="3.1.1.29"/>
    </reaction>
</comment>
<comment type="subunit">
    <text evidence="1">Monomer.</text>
</comment>
<comment type="subcellular location">
    <subcellularLocation>
        <location evidence="1">Cytoplasm</location>
    </subcellularLocation>
</comment>
<comment type="similarity">
    <text evidence="1">Belongs to the PTH family.</text>
</comment>
<keyword id="KW-0963">Cytoplasm</keyword>
<keyword id="KW-0378">Hydrolase</keyword>
<keyword id="KW-1185">Reference proteome</keyword>
<keyword id="KW-0694">RNA-binding</keyword>
<keyword id="KW-0820">tRNA-binding</keyword>
<proteinExistence type="inferred from homology"/>
<sequence>MIRLFVGLGNPGPEYEATRHNAGFWWTDALARRWNCQLQPDRSYHGLMARCTQRGTPVWLLQPMTYMNLSGKSVAALARFFKIEPAEILVVHDELDLLPGQMKLKQGGSAAGHNGLKDIQAQLGNPEFWRLRLGIGHPGVKAEVAAYVLRKPPSAEREAIEACIDRSLDAVDRMLGADMPAAMMQMHAKPPRPKPPRPVTAPGAPVPPTEPSA</sequence>
<gene>
    <name evidence="1" type="primary">pth</name>
    <name type="ordered locus">Lcho_3500</name>
</gene>
<dbReference type="EC" id="3.1.1.29" evidence="1"/>
<dbReference type="EMBL" id="CP001013">
    <property type="protein sequence ID" value="ACB35754.1"/>
    <property type="molecule type" value="Genomic_DNA"/>
</dbReference>
<dbReference type="RefSeq" id="WP_012348501.1">
    <property type="nucleotide sequence ID" value="NC_010524.1"/>
</dbReference>
<dbReference type="SMR" id="B1Y3Q1"/>
<dbReference type="STRING" id="395495.Lcho_3500"/>
<dbReference type="KEGG" id="lch:Lcho_3500"/>
<dbReference type="eggNOG" id="COG0193">
    <property type="taxonomic scope" value="Bacteria"/>
</dbReference>
<dbReference type="HOGENOM" id="CLU_062456_3_1_4"/>
<dbReference type="OrthoDB" id="9800507at2"/>
<dbReference type="Proteomes" id="UP000001693">
    <property type="component" value="Chromosome"/>
</dbReference>
<dbReference type="GO" id="GO:0005737">
    <property type="term" value="C:cytoplasm"/>
    <property type="evidence" value="ECO:0007669"/>
    <property type="project" value="UniProtKB-SubCell"/>
</dbReference>
<dbReference type="GO" id="GO:0004045">
    <property type="term" value="F:peptidyl-tRNA hydrolase activity"/>
    <property type="evidence" value="ECO:0007669"/>
    <property type="project" value="UniProtKB-UniRule"/>
</dbReference>
<dbReference type="GO" id="GO:0000049">
    <property type="term" value="F:tRNA binding"/>
    <property type="evidence" value="ECO:0007669"/>
    <property type="project" value="UniProtKB-UniRule"/>
</dbReference>
<dbReference type="GO" id="GO:0006515">
    <property type="term" value="P:protein quality control for misfolded or incompletely synthesized proteins"/>
    <property type="evidence" value="ECO:0007669"/>
    <property type="project" value="UniProtKB-UniRule"/>
</dbReference>
<dbReference type="GO" id="GO:0072344">
    <property type="term" value="P:rescue of stalled ribosome"/>
    <property type="evidence" value="ECO:0007669"/>
    <property type="project" value="UniProtKB-UniRule"/>
</dbReference>
<dbReference type="CDD" id="cd00462">
    <property type="entry name" value="PTH"/>
    <property type="match status" value="1"/>
</dbReference>
<dbReference type="FunFam" id="3.40.50.1470:FF:000001">
    <property type="entry name" value="Peptidyl-tRNA hydrolase"/>
    <property type="match status" value="1"/>
</dbReference>
<dbReference type="Gene3D" id="3.40.50.1470">
    <property type="entry name" value="Peptidyl-tRNA hydrolase"/>
    <property type="match status" value="1"/>
</dbReference>
<dbReference type="HAMAP" id="MF_00083">
    <property type="entry name" value="Pept_tRNA_hydro_bact"/>
    <property type="match status" value="1"/>
</dbReference>
<dbReference type="InterPro" id="IPR001328">
    <property type="entry name" value="Pept_tRNA_hydro"/>
</dbReference>
<dbReference type="InterPro" id="IPR018171">
    <property type="entry name" value="Pept_tRNA_hydro_CS"/>
</dbReference>
<dbReference type="InterPro" id="IPR036416">
    <property type="entry name" value="Pept_tRNA_hydro_sf"/>
</dbReference>
<dbReference type="NCBIfam" id="TIGR00447">
    <property type="entry name" value="pth"/>
    <property type="match status" value="1"/>
</dbReference>
<dbReference type="PANTHER" id="PTHR17224">
    <property type="entry name" value="PEPTIDYL-TRNA HYDROLASE"/>
    <property type="match status" value="1"/>
</dbReference>
<dbReference type="PANTHER" id="PTHR17224:SF1">
    <property type="entry name" value="PEPTIDYL-TRNA HYDROLASE"/>
    <property type="match status" value="1"/>
</dbReference>
<dbReference type="Pfam" id="PF01195">
    <property type="entry name" value="Pept_tRNA_hydro"/>
    <property type="match status" value="1"/>
</dbReference>
<dbReference type="SUPFAM" id="SSF53178">
    <property type="entry name" value="Peptidyl-tRNA hydrolase-like"/>
    <property type="match status" value="1"/>
</dbReference>
<dbReference type="PROSITE" id="PS01196">
    <property type="entry name" value="PEPT_TRNA_HYDROL_2"/>
    <property type="match status" value="1"/>
</dbReference>
<name>PTH_LEPCP</name>
<accession>B1Y3Q1</accession>
<protein>
    <recommendedName>
        <fullName evidence="1">Peptidyl-tRNA hydrolase</fullName>
        <shortName evidence="1">Pth</shortName>
        <ecNumber evidence="1">3.1.1.29</ecNumber>
    </recommendedName>
</protein>